<dbReference type="EC" id="2.3.1.191" evidence="1"/>
<dbReference type="EMBL" id="AE008923">
    <property type="protein sequence ID" value="AAM36282.1"/>
    <property type="molecule type" value="Genomic_DNA"/>
</dbReference>
<dbReference type="RefSeq" id="WP_005911713.1">
    <property type="nucleotide sequence ID" value="NC_003919.1"/>
</dbReference>
<dbReference type="SMR" id="Q8PML5"/>
<dbReference type="GeneID" id="66910578"/>
<dbReference type="KEGG" id="xac:XAC1411"/>
<dbReference type="eggNOG" id="COG1044">
    <property type="taxonomic scope" value="Bacteria"/>
</dbReference>
<dbReference type="HOGENOM" id="CLU_049865_0_1_6"/>
<dbReference type="UniPathway" id="UPA00973"/>
<dbReference type="Proteomes" id="UP000000576">
    <property type="component" value="Chromosome"/>
</dbReference>
<dbReference type="GO" id="GO:0016020">
    <property type="term" value="C:membrane"/>
    <property type="evidence" value="ECO:0007669"/>
    <property type="project" value="GOC"/>
</dbReference>
<dbReference type="GO" id="GO:0016410">
    <property type="term" value="F:N-acyltransferase activity"/>
    <property type="evidence" value="ECO:0007669"/>
    <property type="project" value="InterPro"/>
</dbReference>
<dbReference type="GO" id="GO:0009245">
    <property type="term" value="P:lipid A biosynthetic process"/>
    <property type="evidence" value="ECO:0007669"/>
    <property type="project" value="UniProtKB-UniRule"/>
</dbReference>
<dbReference type="CDD" id="cd03352">
    <property type="entry name" value="LbH_LpxD"/>
    <property type="match status" value="1"/>
</dbReference>
<dbReference type="Gene3D" id="1.20.5.170">
    <property type="match status" value="1"/>
</dbReference>
<dbReference type="Gene3D" id="2.160.10.10">
    <property type="entry name" value="Hexapeptide repeat proteins"/>
    <property type="match status" value="1"/>
</dbReference>
<dbReference type="Gene3D" id="3.40.1390.10">
    <property type="entry name" value="MurE/MurF, N-terminal domain"/>
    <property type="match status" value="1"/>
</dbReference>
<dbReference type="HAMAP" id="MF_00523">
    <property type="entry name" value="LpxD"/>
    <property type="match status" value="1"/>
</dbReference>
<dbReference type="InterPro" id="IPR001451">
    <property type="entry name" value="Hexapep"/>
</dbReference>
<dbReference type="InterPro" id="IPR007691">
    <property type="entry name" value="LpxD"/>
</dbReference>
<dbReference type="InterPro" id="IPR011004">
    <property type="entry name" value="Trimer_LpxA-like_sf"/>
</dbReference>
<dbReference type="InterPro" id="IPR020573">
    <property type="entry name" value="UDP_GlcNAc_AcTrfase_non-rep"/>
</dbReference>
<dbReference type="NCBIfam" id="TIGR01853">
    <property type="entry name" value="lipid_A_lpxD"/>
    <property type="match status" value="1"/>
</dbReference>
<dbReference type="NCBIfam" id="NF002060">
    <property type="entry name" value="PRK00892.1"/>
    <property type="match status" value="1"/>
</dbReference>
<dbReference type="PANTHER" id="PTHR43378">
    <property type="entry name" value="UDP-3-O-ACYLGLUCOSAMINE N-ACYLTRANSFERASE"/>
    <property type="match status" value="1"/>
</dbReference>
<dbReference type="PANTHER" id="PTHR43378:SF2">
    <property type="entry name" value="UDP-3-O-ACYLGLUCOSAMINE N-ACYLTRANSFERASE 1, MITOCHONDRIAL-RELATED"/>
    <property type="match status" value="1"/>
</dbReference>
<dbReference type="Pfam" id="PF00132">
    <property type="entry name" value="Hexapep"/>
    <property type="match status" value="1"/>
</dbReference>
<dbReference type="Pfam" id="PF14602">
    <property type="entry name" value="Hexapep_2"/>
    <property type="match status" value="2"/>
</dbReference>
<dbReference type="Pfam" id="PF04613">
    <property type="entry name" value="LpxD"/>
    <property type="match status" value="1"/>
</dbReference>
<dbReference type="SUPFAM" id="SSF51161">
    <property type="entry name" value="Trimeric LpxA-like enzymes"/>
    <property type="match status" value="1"/>
</dbReference>
<comment type="function">
    <text evidence="1">Catalyzes the N-acylation of UDP-3-O-acylglucosamine using 3-hydroxyacyl-ACP as the acyl donor. Is involved in the biosynthesis of lipid A, a phosphorylated glycolipid that anchors the lipopolysaccharide to the outer membrane of the cell.</text>
</comment>
<comment type="catalytic activity">
    <reaction evidence="1">
        <text>a UDP-3-O-[(3R)-3-hydroxyacyl]-alpha-D-glucosamine + a (3R)-hydroxyacyl-[ACP] = a UDP-2-N,3-O-bis[(3R)-3-hydroxyacyl]-alpha-D-glucosamine + holo-[ACP] + H(+)</text>
        <dbReference type="Rhea" id="RHEA:53836"/>
        <dbReference type="Rhea" id="RHEA-COMP:9685"/>
        <dbReference type="Rhea" id="RHEA-COMP:9945"/>
        <dbReference type="ChEBI" id="CHEBI:15378"/>
        <dbReference type="ChEBI" id="CHEBI:64479"/>
        <dbReference type="ChEBI" id="CHEBI:78827"/>
        <dbReference type="ChEBI" id="CHEBI:137740"/>
        <dbReference type="ChEBI" id="CHEBI:137748"/>
        <dbReference type="EC" id="2.3.1.191"/>
    </reaction>
</comment>
<comment type="pathway">
    <text evidence="1">Bacterial outer membrane biogenesis; LPS lipid A biosynthesis.</text>
</comment>
<comment type="subunit">
    <text evidence="1">Homotrimer.</text>
</comment>
<comment type="similarity">
    <text evidence="1">Belongs to the transferase hexapeptide repeat family. LpxD subfamily.</text>
</comment>
<protein>
    <recommendedName>
        <fullName evidence="1">UDP-3-O-acylglucosamine N-acyltransferase</fullName>
        <ecNumber evidence="1">2.3.1.191</ecNumber>
    </recommendedName>
</protein>
<gene>
    <name evidence="1" type="primary">lpxD</name>
    <name type="ordered locus">XAC1411</name>
</gene>
<keyword id="KW-0012">Acyltransferase</keyword>
<keyword id="KW-0441">Lipid A biosynthesis</keyword>
<keyword id="KW-0444">Lipid biosynthesis</keyword>
<keyword id="KW-0443">Lipid metabolism</keyword>
<keyword id="KW-0677">Repeat</keyword>
<keyword id="KW-0808">Transferase</keyword>
<proteinExistence type="inferred from homology"/>
<sequence length="337" mass="34960">MRLTASAIAEQFGLTVVGDGTTEVSGVATLAHAGAGQLSFLSNPRYRPQLADTQAAVVVLRADDAEAAKGTALVAKDPYTAFAKIAALFDLAPVREPGIHASAVIDPTAQVSATAHVGPFVSIGARSRVGDGCVIGTGSIIGEDCVVDAGSELLARVTLVTRVRLGKRVRIHPGAVIGADGFGLAMDAGHWIKVPQLGGVVIGDDCEIGANTCIDRGALEDTVLEEDVRVDNLVQIAHNCRIGAHSAIAGCTGIAGSAKIGRYCLLGGHVGVVGHLEICDKVVITGKSVVRNSIHEPGEYSSGTPLTDNRTWRKNAARFKQLDVLARRILAVGKEKE</sequence>
<organism>
    <name type="scientific">Xanthomonas axonopodis pv. citri (strain 306)</name>
    <dbReference type="NCBI Taxonomy" id="190486"/>
    <lineage>
        <taxon>Bacteria</taxon>
        <taxon>Pseudomonadati</taxon>
        <taxon>Pseudomonadota</taxon>
        <taxon>Gammaproteobacteria</taxon>
        <taxon>Lysobacterales</taxon>
        <taxon>Lysobacteraceae</taxon>
        <taxon>Xanthomonas</taxon>
    </lineage>
</organism>
<accession>Q8PML5</accession>
<name>LPXD_XANAC</name>
<feature type="chain" id="PRO_0000059712" description="UDP-3-O-acylglucosamine N-acyltransferase">
    <location>
        <begin position="1"/>
        <end position="337"/>
    </location>
</feature>
<feature type="active site" description="Proton acceptor" evidence="1">
    <location>
        <position position="238"/>
    </location>
</feature>
<reference key="1">
    <citation type="journal article" date="2002" name="Nature">
        <title>Comparison of the genomes of two Xanthomonas pathogens with differing host specificities.</title>
        <authorList>
            <person name="da Silva A.C.R."/>
            <person name="Ferro J.A."/>
            <person name="Reinach F.C."/>
            <person name="Farah C.S."/>
            <person name="Furlan L.R."/>
            <person name="Quaggio R.B."/>
            <person name="Monteiro-Vitorello C.B."/>
            <person name="Van Sluys M.A."/>
            <person name="Almeida N.F. Jr."/>
            <person name="Alves L.M.C."/>
            <person name="do Amaral A.M."/>
            <person name="Bertolini M.C."/>
            <person name="Camargo L.E.A."/>
            <person name="Camarotte G."/>
            <person name="Cannavan F."/>
            <person name="Cardozo J."/>
            <person name="Chambergo F."/>
            <person name="Ciapina L.P."/>
            <person name="Cicarelli R.M.B."/>
            <person name="Coutinho L.L."/>
            <person name="Cursino-Santos J.R."/>
            <person name="El-Dorry H."/>
            <person name="Faria J.B."/>
            <person name="Ferreira A.J.S."/>
            <person name="Ferreira R.C.C."/>
            <person name="Ferro M.I.T."/>
            <person name="Formighieri E.F."/>
            <person name="Franco M.C."/>
            <person name="Greggio C.C."/>
            <person name="Gruber A."/>
            <person name="Katsuyama A.M."/>
            <person name="Kishi L.T."/>
            <person name="Leite R.P."/>
            <person name="Lemos E.G.M."/>
            <person name="Lemos M.V.F."/>
            <person name="Locali E.C."/>
            <person name="Machado M.A."/>
            <person name="Madeira A.M.B.N."/>
            <person name="Martinez-Rossi N.M."/>
            <person name="Martins E.C."/>
            <person name="Meidanis J."/>
            <person name="Menck C.F.M."/>
            <person name="Miyaki C.Y."/>
            <person name="Moon D.H."/>
            <person name="Moreira L.M."/>
            <person name="Novo M.T.M."/>
            <person name="Okura V.K."/>
            <person name="Oliveira M.C."/>
            <person name="Oliveira V.R."/>
            <person name="Pereira H.A."/>
            <person name="Rossi A."/>
            <person name="Sena J.A.D."/>
            <person name="Silva C."/>
            <person name="de Souza R.F."/>
            <person name="Spinola L.A.F."/>
            <person name="Takita M.A."/>
            <person name="Tamura R.E."/>
            <person name="Teixeira E.C."/>
            <person name="Tezza R.I.D."/>
            <person name="Trindade dos Santos M."/>
            <person name="Truffi D."/>
            <person name="Tsai S.M."/>
            <person name="White F.F."/>
            <person name="Setubal J.C."/>
            <person name="Kitajima J.P."/>
        </authorList>
    </citation>
    <scope>NUCLEOTIDE SEQUENCE [LARGE SCALE GENOMIC DNA]</scope>
    <source>
        <strain>306</strain>
    </source>
</reference>
<evidence type="ECO:0000255" key="1">
    <source>
        <dbReference type="HAMAP-Rule" id="MF_00523"/>
    </source>
</evidence>